<protein>
    <recommendedName>
        <fullName evidence="1">UPF0391 membrane protein BPSS2216</fullName>
    </recommendedName>
</protein>
<evidence type="ECO:0000255" key="1">
    <source>
        <dbReference type="HAMAP-Rule" id="MF_01361"/>
    </source>
</evidence>
<evidence type="ECO:0000305" key="2"/>
<sequence length="53" mass="5686">MLRYALVFFIIAIIAAVLGFGGIAAGAAEIAKILFYIFVVIFLVTLVLGVARR</sequence>
<name>Y6216_BURPS</name>
<comment type="subcellular location">
    <subcellularLocation>
        <location evidence="1">Cell membrane</location>
        <topology evidence="1">Multi-pass membrane protein</topology>
    </subcellularLocation>
</comment>
<comment type="similarity">
    <text evidence="1">Belongs to the UPF0391 family.</text>
</comment>
<comment type="sequence caution" evidence="2">
    <conflict type="erroneous initiation">
        <sequence resource="EMBL-CDS" id="CAH39701"/>
    </conflict>
</comment>
<gene>
    <name type="ordered locus">BPSS2216</name>
</gene>
<keyword id="KW-1003">Cell membrane</keyword>
<keyword id="KW-0472">Membrane</keyword>
<keyword id="KW-1185">Reference proteome</keyword>
<keyword id="KW-0812">Transmembrane</keyword>
<keyword id="KW-1133">Transmembrane helix</keyword>
<organism>
    <name type="scientific">Burkholderia pseudomallei (strain K96243)</name>
    <dbReference type="NCBI Taxonomy" id="272560"/>
    <lineage>
        <taxon>Bacteria</taxon>
        <taxon>Pseudomonadati</taxon>
        <taxon>Pseudomonadota</taxon>
        <taxon>Betaproteobacteria</taxon>
        <taxon>Burkholderiales</taxon>
        <taxon>Burkholderiaceae</taxon>
        <taxon>Burkholderia</taxon>
        <taxon>pseudomallei group</taxon>
    </lineage>
</organism>
<feature type="chain" id="PRO_0000256723" description="UPF0391 membrane protein BPSS2216">
    <location>
        <begin position="1"/>
        <end position="53"/>
    </location>
</feature>
<feature type="transmembrane region" description="Helical" evidence="1">
    <location>
        <begin position="5"/>
        <end position="25"/>
    </location>
</feature>
<feature type="transmembrane region" description="Helical" evidence="1">
    <location>
        <begin position="30"/>
        <end position="50"/>
    </location>
</feature>
<proteinExistence type="inferred from homology"/>
<dbReference type="EMBL" id="BX571966">
    <property type="protein sequence ID" value="CAH39701.1"/>
    <property type="status" value="ALT_INIT"/>
    <property type="molecule type" value="Genomic_DNA"/>
</dbReference>
<dbReference type="RefSeq" id="WP_004546352.1">
    <property type="nucleotide sequence ID" value="NZ_CP009537.1"/>
</dbReference>
<dbReference type="RefSeq" id="YP_112218.1">
    <property type="nucleotide sequence ID" value="NC_006351.1"/>
</dbReference>
<dbReference type="STRING" id="272560.BPSS2216"/>
<dbReference type="KEGG" id="bps:BPSS2216"/>
<dbReference type="PATRIC" id="fig|272560.51.peg.5805"/>
<dbReference type="eggNOG" id="COG5487">
    <property type="taxonomic scope" value="Bacteria"/>
</dbReference>
<dbReference type="Proteomes" id="UP000000605">
    <property type="component" value="Chromosome 2"/>
</dbReference>
<dbReference type="GO" id="GO:0005886">
    <property type="term" value="C:plasma membrane"/>
    <property type="evidence" value="ECO:0007669"/>
    <property type="project" value="UniProtKB-SubCell"/>
</dbReference>
<dbReference type="HAMAP" id="MF_01361">
    <property type="entry name" value="UPF0391"/>
    <property type="match status" value="1"/>
</dbReference>
<dbReference type="InterPro" id="IPR009760">
    <property type="entry name" value="DUF1328"/>
</dbReference>
<dbReference type="NCBIfam" id="NF010226">
    <property type="entry name" value="PRK13682.1-1"/>
    <property type="match status" value="1"/>
</dbReference>
<dbReference type="NCBIfam" id="NF010229">
    <property type="entry name" value="PRK13682.1-4"/>
    <property type="match status" value="1"/>
</dbReference>
<dbReference type="Pfam" id="PF07043">
    <property type="entry name" value="DUF1328"/>
    <property type="match status" value="1"/>
</dbReference>
<dbReference type="PIRSF" id="PIRSF036466">
    <property type="entry name" value="UCP036466"/>
    <property type="match status" value="1"/>
</dbReference>
<accession>Q63I54</accession>
<reference key="1">
    <citation type="journal article" date="2004" name="Proc. Natl. Acad. Sci. U.S.A.">
        <title>Genomic plasticity of the causative agent of melioidosis, Burkholderia pseudomallei.</title>
        <authorList>
            <person name="Holden M.T.G."/>
            <person name="Titball R.W."/>
            <person name="Peacock S.J."/>
            <person name="Cerdeno-Tarraga A.-M."/>
            <person name="Atkins T."/>
            <person name="Crossman L.C."/>
            <person name="Pitt T."/>
            <person name="Churcher C."/>
            <person name="Mungall K.L."/>
            <person name="Bentley S.D."/>
            <person name="Sebaihia M."/>
            <person name="Thomson N.R."/>
            <person name="Bason N."/>
            <person name="Beacham I.R."/>
            <person name="Brooks K."/>
            <person name="Brown K.A."/>
            <person name="Brown N.F."/>
            <person name="Challis G.L."/>
            <person name="Cherevach I."/>
            <person name="Chillingworth T."/>
            <person name="Cronin A."/>
            <person name="Crossett B."/>
            <person name="Davis P."/>
            <person name="DeShazer D."/>
            <person name="Feltwell T."/>
            <person name="Fraser A."/>
            <person name="Hance Z."/>
            <person name="Hauser H."/>
            <person name="Holroyd S."/>
            <person name="Jagels K."/>
            <person name="Keith K.E."/>
            <person name="Maddison M."/>
            <person name="Moule S."/>
            <person name="Price C."/>
            <person name="Quail M.A."/>
            <person name="Rabbinowitsch E."/>
            <person name="Rutherford K."/>
            <person name="Sanders M."/>
            <person name="Simmonds M."/>
            <person name="Songsivilai S."/>
            <person name="Stevens K."/>
            <person name="Tumapa S."/>
            <person name="Vesaratchavest M."/>
            <person name="Whitehead S."/>
            <person name="Yeats C."/>
            <person name="Barrell B.G."/>
            <person name="Oyston P.C.F."/>
            <person name="Parkhill J."/>
        </authorList>
    </citation>
    <scope>NUCLEOTIDE SEQUENCE [LARGE SCALE GENOMIC DNA]</scope>
    <source>
        <strain>K96243</strain>
    </source>
</reference>